<gene>
    <name evidence="2 4" type="primary">sepF</name>
    <name evidence="4" type="ordered locus">HVO_0392</name>
    <name evidence="5" type="ORF">C498_16738</name>
</gene>
<accession>D4H018</accession>
<accession>A0A384LGM0</accession>
<accession>L9UK63</accession>
<sequence>MGIMSKILGGGGSRTTEDYVELDLDDFDTARGDAGLSVHIAEIGGQQDVIAIKDAVYDGNLVIADITRHTTSDSTMEHIIDDLRQVAREVDGDIVQKGDDQIVITPTGISISRQKLNG</sequence>
<organism evidence="4">
    <name type="scientific">Haloferax volcanii (strain ATCC 29605 / DSM 3757 / JCM 8879 / NBRC 14742 / NCIMB 2012 / VKM B-1768 / DS2)</name>
    <name type="common">Halobacterium volcanii</name>
    <dbReference type="NCBI Taxonomy" id="309800"/>
    <lineage>
        <taxon>Archaea</taxon>
        <taxon>Methanobacteriati</taxon>
        <taxon>Methanobacteriota</taxon>
        <taxon>Stenosarchaea group</taxon>
        <taxon>Halobacteria</taxon>
        <taxon>Halobacteriales</taxon>
        <taxon>Haloferacaceae</taxon>
        <taxon>Haloferax</taxon>
    </lineage>
</organism>
<name>SEPF_HALVD</name>
<dbReference type="EMBL" id="CP001956">
    <property type="protein sequence ID" value="ADE03140.1"/>
    <property type="molecule type" value="Genomic_DNA"/>
</dbReference>
<dbReference type="EMBL" id="AOHU01000102">
    <property type="protein sequence ID" value="ELY25041.1"/>
    <property type="molecule type" value="Genomic_DNA"/>
</dbReference>
<dbReference type="RefSeq" id="WP_004044531.1">
    <property type="nucleotide sequence ID" value="NC_013967.1"/>
</dbReference>
<dbReference type="SMR" id="D4H018"/>
<dbReference type="STRING" id="309800.HVO_0392"/>
<dbReference type="PaxDb" id="309800-C498_16738"/>
<dbReference type="EnsemblBacteria" id="ADE03140">
    <property type="protein sequence ID" value="ADE03140"/>
    <property type="gene ID" value="HVO_0392"/>
</dbReference>
<dbReference type="GeneID" id="8924204"/>
<dbReference type="KEGG" id="hvo:HVO_0392"/>
<dbReference type="PATRIC" id="fig|309800.29.peg.3244"/>
<dbReference type="eggNOG" id="arCOG02263">
    <property type="taxonomic scope" value="Archaea"/>
</dbReference>
<dbReference type="HOGENOM" id="CLU_131897_0_0_2"/>
<dbReference type="OrthoDB" id="56189at2157"/>
<dbReference type="Proteomes" id="UP000008243">
    <property type="component" value="Chromosome"/>
</dbReference>
<dbReference type="Proteomes" id="UP000011532">
    <property type="component" value="Unassembled WGS sequence"/>
</dbReference>
<dbReference type="GO" id="GO:0032153">
    <property type="term" value="C:cell division site"/>
    <property type="evidence" value="ECO:0000314"/>
    <property type="project" value="UniProtKB"/>
</dbReference>
<dbReference type="GO" id="GO:0005737">
    <property type="term" value="C:cytoplasm"/>
    <property type="evidence" value="ECO:0000314"/>
    <property type="project" value="UniProtKB"/>
</dbReference>
<dbReference type="GO" id="GO:0042802">
    <property type="term" value="F:identical protein binding"/>
    <property type="evidence" value="ECO:0000314"/>
    <property type="project" value="UniProtKB"/>
</dbReference>
<dbReference type="GO" id="GO:0042803">
    <property type="term" value="F:protein homodimerization activity"/>
    <property type="evidence" value="ECO:0000314"/>
    <property type="project" value="UniProtKB"/>
</dbReference>
<dbReference type="GO" id="GO:0051301">
    <property type="term" value="P:cell division"/>
    <property type="evidence" value="ECO:0000315"/>
    <property type="project" value="UniProtKB"/>
</dbReference>
<dbReference type="Gene3D" id="3.30.110.150">
    <property type="entry name" value="SepF-like protein"/>
    <property type="match status" value="1"/>
</dbReference>
<dbReference type="InterPro" id="IPR007561">
    <property type="entry name" value="Cell_div_SepF/SepF-rel"/>
</dbReference>
<dbReference type="InterPro" id="IPR038594">
    <property type="entry name" value="SepF-like_sf"/>
</dbReference>
<dbReference type="InterPro" id="IPR012426">
    <property type="entry name" value="SepF_arc"/>
</dbReference>
<dbReference type="Pfam" id="PF04472">
    <property type="entry name" value="SepF"/>
    <property type="match status" value="1"/>
</dbReference>
<dbReference type="PIRSF" id="PIRSF019313">
    <property type="entry name" value="UCP019313"/>
    <property type="match status" value="1"/>
</dbReference>
<feature type="chain" id="PRO_0000454725" description="Cell division protein SepF">
    <location>
        <begin position="1"/>
        <end position="118"/>
    </location>
</feature>
<feature type="region of interest" description="Important for localization in a ring-like structure at midcell" evidence="1">
    <location>
        <begin position="1"/>
        <end position="12"/>
    </location>
</feature>
<proteinExistence type="evidence at protein level"/>
<comment type="function">
    <text evidence="1">Involved in cell division. Probably acts as a membrane anchor for FstZ2, tethering its filaments to the division site. May be involved in septum closure.</text>
</comment>
<comment type="subunit">
    <text evidence="1">Homodimer. Does not oligomerize. Interacts with FtsZ2.</text>
</comment>
<comment type="subcellular location">
    <subcellularLocation>
        <location evidence="1">Cytoplasm</location>
    </subcellularLocation>
    <text evidence="1">Localizes in a ring-like structure at the cell division plane at midcell. Localizes at the future site of cell division straight after the closure of the septum. Co-localizes with FtsZ1 and FtsZ2. FtsZ1 is important for its proper localization.</text>
</comment>
<comment type="disruption phenotype">
    <text evidence="1">Depletion of this protein leads to formation of large cells with a cragged cell surface, which are unable to establish a cell division plane.</text>
</comment>
<keyword id="KW-0131">Cell cycle</keyword>
<keyword id="KW-0132">Cell division</keyword>
<keyword id="KW-0963">Cytoplasm</keyword>
<keyword id="KW-1185">Reference proteome</keyword>
<keyword id="KW-0717">Septation</keyword>
<protein>
    <recommendedName>
        <fullName evidence="3">Cell division protein SepF</fullName>
    </recommendedName>
</protein>
<reference evidence="4 6" key="1">
    <citation type="journal article" date="2010" name="PLoS ONE">
        <title>The complete genome sequence of Haloferax volcanii DS2, a model archaeon.</title>
        <authorList>
            <person name="Hartman A.L."/>
            <person name="Norais C."/>
            <person name="Badger J.H."/>
            <person name="Delmas S."/>
            <person name="Haldenby S."/>
            <person name="Madupu R."/>
            <person name="Robinson J."/>
            <person name="Khouri H."/>
            <person name="Ren Q."/>
            <person name="Lowe T.M."/>
            <person name="Maupin-Furlow J."/>
            <person name="Pohlschroder M."/>
            <person name="Daniels C."/>
            <person name="Pfeiffer F."/>
            <person name="Allers T."/>
            <person name="Eisen J.A."/>
        </authorList>
    </citation>
    <scope>NUCLEOTIDE SEQUENCE [LARGE SCALE GENOMIC DNA]</scope>
    <source>
        <strain evidence="6">ATCC 29605 / DSM 3757 / JCM 8879 / NBRC 14742 / NCIMB 2012 / VKM B-1768 / DS2</strain>
    </source>
</reference>
<reference evidence="5 7" key="2">
    <citation type="journal article" date="2014" name="PLoS Genet.">
        <title>Phylogenetically driven sequencing of extremely halophilic archaea reveals strategies for static and dynamic osmo-response.</title>
        <authorList>
            <person name="Becker E.A."/>
            <person name="Seitzer P.M."/>
            <person name="Tritt A."/>
            <person name="Larsen D."/>
            <person name="Krusor M."/>
            <person name="Yao A.I."/>
            <person name="Wu D."/>
            <person name="Madern D."/>
            <person name="Eisen J.A."/>
            <person name="Darling A.E."/>
            <person name="Facciotti M.T."/>
        </authorList>
    </citation>
    <scope>NUCLEOTIDE SEQUENCE [LARGE SCALE GENOMIC DNA]</scope>
    <source>
        <strain evidence="7">ATCC 29605 / DSM 3757 / JCM 8879 / NBRC 14742 / NCIMB 2012 / VKM B-1768 / DS2</strain>
    </source>
</reference>
<reference key="3">
    <citation type="journal article" date="2021" name="Nat. Commun.">
        <title>The archaeal protein SepF is essential for cell division in Haloferax volcanii.</title>
        <authorList>
            <person name="Nussbaum P."/>
            <person name="Gerstner M."/>
            <person name="Dingethal M."/>
            <person name="Erb C."/>
            <person name="Albers S.V."/>
        </authorList>
    </citation>
    <scope>FUNCTION</scope>
    <scope>SUBUNIT</scope>
    <scope>INTERACTION WITH FTSZ2</scope>
    <scope>SUBCELLULAR LOCATION</scope>
    <scope>DISRUPTION PHENOTYPE</scope>
    <scope>REGION</scope>
    <source>
        <strain evidence="2">ATCC 29605 / DSM 3757 / JCM 8879 / NBRC 14742 / NCIMB 2012 / VKM B-1768 / DS2</strain>
    </source>
</reference>
<evidence type="ECO:0000269" key="1">
    <source>
    </source>
</evidence>
<evidence type="ECO:0000303" key="2">
    <source>
    </source>
</evidence>
<evidence type="ECO:0000305" key="3"/>
<evidence type="ECO:0000312" key="4">
    <source>
        <dbReference type="EMBL" id="ADE03140.1"/>
    </source>
</evidence>
<evidence type="ECO:0000312" key="5">
    <source>
        <dbReference type="EMBL" id="ELY25041.1"/>
    </source>
</evidence>
<evidence type="ECO:0000312" key="6">
    <source>
        <dbReference type="Proteomes" id="UP000008243"/>
    </source>
</evidence>
<evidence type="ECO:0000312" key="7">
    <source>
        <dbReference type="Proteomes" id="UP000011532"/>
    </source>
</evidence>